<feature type="signal peptide" description="Tat-type signal" evidence="1 2">
    <location>
        <begin position="1"/>
        <end position="32"/>
    </location>
</feature>
<feature type="chain" id="PRO_0000013420" description="Periplasmic [NiFeSe] hydrogenase small subunit">
    <location>
        <begin position="33"/>
        <end position="315"/>
    </location>
</feature>
<feature type="binding site">
    <location>
        <position position="50"/>
    </location>
    <ligand>
        <name>[4Fe-4S] cluster</name>
        <dbReference type="ChEBI" id="CHEBI:49883"/>
        <label>1</label>
    </ligand>
</feature>
<feature type="binding site">
    <location>
        <position position="53"/>
    </location>
    <ligand>
        <name>[4Fe-4S] cluster</name>
        <dbReference type="ChEBI" id="CHEBI:49883"/>
        <label>1</label>
    </ligand>
</feature>
<feature type="binding site">
    <location>
        <position position="158"/>
    </location>
    <ligand>
        <name>[4Fe-4S] cluster</name>
        <dbReference type="ChEBI" id="CHEBI:49883"/>
        <label>1</label>
    </ligand>
</feature>
<feature type="binding site">
    <location>
        <position position="196"/>
    </location>
    <ligand>
        <name>[4Fe-4S] cluster</name>
        <dbReference type="ChEBI" id="CHEBI:49883"/>
        <label>1</label>
    </ligand>
</feature>
<feature type="binding site">
    <location>
        <position position="240"/>
    </location>
    <ligand>
        <name>[4Fe-4S] cluster</name>
        <dbReference type="ChEBI" id="CHEBI:49883"/>
        <label>2</label>
    </ligand>
</feature>
<feature type="binding site">
    <location>
        <position position="243"/>
    </location>
    <ligand>
        <name>[4Fe-4S] cluster</name>
        <dbReference type="ChEBI" id="CHEBI:49883"/>
        <label>2</label>
    </ligand>
</feature>
<feature type="binding site">
    <location>
        <position position="263"/>
    </location>
    <ligand>
        <name>[4Fe-4S] cluster</name>
        <dbReference type="ChEBI" id="CHEBI:49883"/>
        <label>2</label>
    </ligand>
</feature>
<feature type="binding site">
    <location>
        <position position="269"/>
    </location>
    <ligand>
        <name>[4Fe-4S] cluster</name>
        <dbReference type="ChEBI" id="CHEBI:49883"/>
        <label>2</label>
    </ligand>
</feature>
<feature type="binding site">
    <location>
        <position position="278"/>
    </location>
    <ligand>
        <name>[4Fe-4S] cluster</name>
        <dbReference type="ChEBI" id="CHEBI:49883"/>
        <label>3</label>
    </ligand>
</feature>
<feature type="binding site">
    <location>
        <position position="290"/>
    </location>
    <ligand>
        <name>[4Fe-4S] cluster</name>
        <dbReference type="ChEBI" id="CHEBI:49883"/>
        <label>3</label>
    </ligand>
</feature>
<feature type="binding site">
    <location>
        <position position="296"/>
    </location>
    <ligand>
        <name>[4Fe-4S] cluster</name>
        <dbReference type="ChEBI" id="CHEBI:49883"/>
        <label>3</label>
    </ligand>
</feature>
<feature type="binding site">
    <location>
        <position position="299"/>
    </location>
    <ligand>
        <name>[4Fe-4S] cluster</name>
        <dbReference type="ChEBI" id="CHEBI:49883"/>
        <label>3</label>
    </ligand>
</feature>
<feature type="strand" evidence="5">
    <location>
        <begin position="40"/>
        <end position="48"/>
    </location>
</feature>
<feature type="helix" evidence="5">
    <location>
        <begin position="52"/>
        <end position="58"/>
    </location>
</feature>
<feature type="turn" evidence="5">
    <location>
        <begin position="61"/>
        <end position="64"/>
    </location>
</feature>
<feature type="helix" evidence="5">
    <location>
        <begin position="65"/>
        <end position="71"/>
    </location>
</feature>
<feature type="strand" evidence="5">
    <location>
        <begin position="73"/>
        <end position="77"/>
    </location>
</feature>
<feature type="turn" evidence="5">
    <location>
        <begin position="79"/>
        <end position="81"/>
    </location>
</feature>
<feature type="helix" evidence="5">
    <location>
        <begin position="86"/>
        <end position="99"/>
    </location>
</feature>
<feature type="turn" evidence="5">
    <location>
        <begin position="100"/>
        <end position="102"/>
    </location>
</feature>
<feature type="strand" evidence="5">
    <location>
        <begin position="103"/>
        <end position="113"/>
    </location>
</feature>
<feature type="helix" evidence="5">
    <location>
        <begin position="115"/>
        <end position="118"/>
    </location>
</feature>
<feature type="strand" evidence="5">
    <location>
        <begin position="121"/>
        <end position="127"/>
    </location>
</feature>
<feature type="strand" evidence="4">
    <location>
        <begin position="129"/>
        <end position="131"/>
    </location>
</feature>
<feature type="strand" evidence="5">
    <location>
        <begin position="133"/>
        <end position="137"/>
    </location>
</feature>
<feature type="helix" evidence="5">
    <location>
        <begin position="138"/>
        <end position="145"/>
    </location>
</feature>
<feature type="helix" evidence="5">
    <location>
        <begin position="146"/>
        <end position="148"/>
    </location>
</feature>
<feature type="strand" evidence="5">
    <location>
        <begin position="149"/>
        <end position="156"/>
    </location>
</feature>
<feature type="helix" evidence="5">
    <location>
        <begin position="157"/>
        <end position="161"/>
    </location>
</feature>
<feature type="helix" evidence="5">
    <location>
        <begin position="164"/>
        <end position="166"/>
    </location>
</feature>
<feature type="helix" evidence="5">
    <location>
        <begin position="177"/>
        <end position="184"/>
    </location>
</feature>
<feature type="strand" evidence="5">
    <location>
        <begin position="190"/>
        <end position="193"/>
    </location>
</feature>
<feature type="strand" evidence="5">
    <location>
        <begin position="195"/>
        <end position="197"/>
    </location>
</feature>
<feature type="helix" evidence="5">
    <location>
        <begin position="200"/>
        <end position="215"/>
    </location>
</feature>
<feature type="turn" evidence="5">
    <location>
        <begin position="217"/>
        <end position="219"/>
    </location>
</feature>
<feature type="helix" evidence="5">
    <location>
        <begin position="232"/>
        <end position="235"/>
    </location>
</feature>
<feature type="strand" evidence="5">
    <location>
        <begin position="236"/>
        <end position="238"/>
    </location>
</feature>
<feature type="helix" evidence="5">
    <location>
        <begin position="240"/>
        <end position="242"/>
    </location>
</feature>
<feature type="helix" evidence="5">
    <location>
        <begin position="246"/>
        <end position="250"/>
    </location>
</feature>
<feature type="strand" evidence="5">
    <location>
        <begin position="260"/>
        <end position="264"/>
    </location>
</feature>
<feature type="helix" evidence="5">
    <location>
        <begin position="265"/>
        <end position="267"/>
    </location>
</feature>
<feature type="helix" evidence="5">
    <location>
        <begin position="271"/>
        <end position="273"/>
    </location>
</feature>
<feature type="helix" evidence="5">
    <location>
        <begin position="278"/>
        <end position="281"/>
    </location>
</feature>
<feature type="turn" evidence="5">
    <location>
        <begin position="284"/>
        <end position="287"/>
    </location>
</feature>
<feature type="helix" evidence="5">
    <location>
        <begin position="290"/>
        <end position="293"/>
    </location>
</feature>
<feature type="turn" evidence="5">
    <location>
        <begin position="302"/>
        <end position="305"/>
    </location>
</feature>
<feature type="helix" evidence="5">
    <location>
        <begin position="306"/>
        <end position="308"/>
    </location>
</feature>
<keyword id="KW-0002">3D-structure</keyword>
<keyword id="KW-0004">4Fe-4S</keyword>
<keyword id="KW-0903">Direct protein sequencing</keyword>
<keyword id="KW-0408">Iron</keyword>
<keyword id="KW-0411">Iron-sulfur</keyword>
<keyword id="KW-0479">Metal-binding</keyword>
<keyword id="KW-0560">Oxidoreductase</keyword>
<keyword id="KW-0574">Periplasm</keyword>
<keyword id="KW-0732">Signal</keyword>
<comment type="catalytic activity">
    <reaction>
        <text>H2 + A = AH2</text>
        <dbReference type="Rhea" id="RHEA:12116"/>
        <dbReference type="ChEBI" id="CHEBI:13193"/>
        <dbReference type="ChEBI" id="CHEBI:17499"/>
        <dbReference type="ChEBI" id="CHEBI:18276"/>
        <dbReference type="EC" id="1.12.99.6"/>
    </reaction>
</comment>
<comment type="cofactor">
    <cofactor>
        <name>[4Fe-4S] cluster</name>
        <dbReference type="ChEBI" id="CHEBI:49883"/>
    </cofactor>
    <text>Binds 3 [4Fe-4S] clusters. Cluster 1 is referred to as proximal, cluster 2 as distal, cluster 3 as medial.</text>
</comment>
<comment type="subunit">
    <text>Heterodimer of a large and a small subunit.</text>
</comment>
<comment type="subcellular location">
    <subcellularLocation>
        <location>Periplasm</location>
    </subcellularLocation>
</comment>
<comment type="PTM">
    <text>Predicted to be exported by the Tat system. The position of the signal peptide cleavage has been experimentally proven.</text>
</comment>
<comment type="similarity">
    <text evidence="3">Belongs to the [NiFe]/[NiFeSe] hydrogenase small subunit family.</text>
</comment>
<dbReference type="EC" id="1.12.99.6"/>
<dbReference type="EMBL" id="M18271">
    <property type="protein sequence ID" value="AAA23376.1"/>
    <property type="molecule type" value="Genomic_DNA"/>
</dbReference>
<dbReference type="PIR" id="A28380">
    <property type="entry name" value="HQDVSB"/>
</dbReference>
<dbReference type="PDB" id="1CC1">
    <property type="method" value="X-ray"/>
    <property type="resolution" value="2.15 A"/>
    <property type="chains" value="S=33-315"/>
</dbReference>
<dbReference type="PDB" id="4KL8">
    <property type="method" value="X-ray"/>
    <property type="resolution" value="1.52 A"/>
    <property type="chains" value="S/T=33-315"/>
</dbReference>
<dbReference type="PDB" id="4KN9">
    <property type="method" value="X-ray"/>
    <property type="resolution" value="1.40 A"/>
    <property type="chains" value="S/T=33-315"/>
</dbReference>
<dbReference type="PDB" id="4KO1">
    <property type="method" value="X-ray"/>
    <property type="resolution" value="1.55 A"/>
    <property type="chains" value="S/T=33-315"/>
</dbReference>
<dbReference type="PDB" id="4KO2">
    <property type="method" value="X-ray"/>
    <property type="resolution" value="1.60 A"/>
    <property type="chains" value="S/T=33-315"/>
</dbReference>
<dbReference type="PDB" id="4KO3">
    <property type="method" value="X-ray"/>
    <property type="resolution" value="1.70 A"/>
    <property type="chains" value="S/T=33-315"/>
</dbReference>
<dbReference type="PDB" id="4KO4">
    <property type="method" value="X-ray"/>
    <property type="resolution" value="2.00 A"/>
    <property type="chains" value="S/T=33-315"/>
</dbReference>
<dbReference type="PDBsum" id="1CC1"/>
<dbReference type="PDBsum" id="4KL8"/>
<dbReference type="PDBsum" id="4KN9"/>
<dbReference type="PDBsum" id="4KO1"/>
<dbReference type="PDBsum" id="4KO2"/>
<dbReference type="PDBsum" id="4KO3"/>
<dbReference type="PDBsum" id="4KO4"/>
<dbReference type="SMR" id="P13063"/>
<dbReference type="DIP" id="DIP-6126N"/>
<dbReference type="IntAct" id="P13063">
    <property type="interactions" value="1"/>
</dbReference>
<dbReference type="EvolutionaryTrace" id="P13063"/>
<dbReference type="GO" id="GO:0044569">
    <property type="term" value="C:[Ni-Fe] hydrogenase complex"/>
    <property type="evidence" value="ECO:0007669"/>
    <property type="project" value="TreeGrafter"/>
</dbReference>
<dbReference type="GO" id="GO:0009375">
    <property type="term" value="C:ferredoxin hydrogenase complex"/>
    <property type="evidence" value="ECO:0007669"/>
    <property type="project" value="InterPro"/>
</dbReference>
<dbReference type="GO" id="GO:0016020">
    <property type="term" value="C:membrane"/>
    <property type="evidence" value="ECO:0007669"/>
    <property type="project" value="TreeGrafter"/>
</dbReference>
<dbReference type="GO" id="GO:0042597">
    <property type="term" value="C:periplasmic space"/>
    <property type="evidence" value="ECO:0007669"/>
    <property type="project" value="UniProtKB-SubCell"/>
</dbReference>
<dbReference type="GO" id="GO:0051539">
    <property type="term" value="F:4 iron, 4 sulfur cluster binding"/>
    <property type="evidence" value="ECO:0007669"/>
    <property type="project" value="UniProtKB-KW"/>
</dbReference>
<dbReference type="GO" id="GO:0009055">
    <property type="term" value="F:electron transfer activity"/>
    <property type="evidence" value="ECO:0007669"/>
    <property type="project" value="TreeGrafter"/>
</dbReference>
<dbReference type="GO" id="GO:0008901">
    <property type="term" value="F:ferredoxin hydrogenase activity"/>
    <property type="evidence" value="ECO:0007669"/>
    <property type="project" value="InterPro"/>
</dbReference>
<dbReference type="GO" id="GO:0033748">
    <property type="term" value="F:hydrogenase (acceptor) activity"/>
    <property type="evidence" value="ECO:0007669"/>
    <property type="project" value="UniProtKB-EC"/>
</dbReference>
<dbReference type="GO" id="GO:0046872">
    <property type="term" value="F:metal ion binding"/>
    <property type="evidence" value="ECO:0007669"/>
    <property type="project" value="UniProtKB-KW"/>
</dbReference>
<dbReference type="GO" id="GO:0009061">
    <property type="term" value="P:anaerobic respiration"/>
    <property type="evidence" value="ECO:0007669"/>
    <property type="project" value="TreeGrafter"/>
</dbReference>
<dbReference type="Gene3D" id="4.10.480.10">
    <property type="entry name" value="Cytochrome-c3 hydrogenase, C-terminal domain"/>
    <property type="match status" value="1"/>
</dbReference>
<dbReference type="Gene3D" id="3.40.50.700">
    <property type="entry name" value="NADH:ubiquinone oxidoreductase-like, 20kDa subunit"/>
    <property type="match status" value="1"/>
</dbReference>
<dbReference type="InterPro" id="IPR027394">
    <property type="entry name" value="Cytochrome-c3_hydrogenase_C"/>
</dbReference>
<dbReference type="InterPro" id="IPR006137">
    <property type="entry name" value="NADH_UbQ_OxRdtase-like_20kDa"/>
</dbReference>
<dbReference type="InterPro" id="IPR037148">
    <property type="entry name" value="NiFe-Hase_small_C_sf"/>
</dbReference>
<dbReference type="InterPro" id="IPR053622">
    <property type="entry name" value="NiFe/NiFeSe_hyd_small_subunit"/>
</dbReference>
<dbReference type="InterPro" id="IPR037024">
    <property type="entry name" value="NiFe_Hase_small_N_sf"/>
</dbReference>
<dbReference type="InterPro" id="IPR001821">
    <property type="entry name" value="NiFe_hydrogenase_ssu"/>
</dbReference>
<dbReference type="InterPro" id="IPR006311">
    <property type="entry name" value="TAT_signal"/>
</dbReference>
<dbReference type="InterPro" id="IPR019546">
    <property type="entry name" value="TAT_signal_bac_arc"/>
</dbReference>
<dbReference type="NCBIfam" id="NF045520">
    <property type="entry name" value="H2_NiFeSe_small"/>
    <property type="match status" value="1"/>
</dbReference>
<dbReference type="NCBIfam" id="TIGR00391">
    <property type="entry name" value="hydA"/>
    <property type="match status" value="1"/>
</dbReference>
<dbReference type="NCBIfam" id="TIGR01409">
    <property type="entry name" value="TAT_signal_seq"/>
    <property type="match status" value="1"/>
</dbReference>
<dbReference type="PANTHER" id="PTHR30013:SF5">
    <property type="entry name" value="HYDROGENASE SMALL SUBUNIT"/>
    <property type="match status" value="1"/>
</dbReference>
<dbReference type="PANTHER" id="PTHR30013">
    <property type="entry name" value="NIFE / NIFESE HYDROGENASE SMALL SUBUNIT FAMILY MEMBER"/>
    <property type="match status" value="1"/>
</dbReference>
<dbReference type="Pfam" id="PF14720">
    <property type="entry name" value="NiFe_hyd_SSU_C"/>
    <property type="match status" value="1"/>
</dbReference>
<dbReference type="Pfam" id="PF01058">
    <property type="entry name" value="Oxidored_q6"/>
    <property type="match status" value="1"/>
</dbReference>
<dbReference type="PIRSF" id="PIRSF000310">
    <property type="entry name" value="NiFe_hyd_ssu"/>
    <property type="match status" value="1"/>
</dbReference>
<dbReference type="PRINTS" id="PR00614">
    <property type="entry name" value="NIHGNASESMLL"/>
</dbReference>
<dbReference type="SUPFAM" id="SSF56770">
    <property type="entry name" value="HydA/Nqo6-like"/>
    <property type="match status" value="1"/>
</dbReference>
<dbReference type="PROSITE" id="PS51318">
    <property type="entry name" value="TAT"/>
    <property type="match status" value="1"/>
</dbReference>
<proteinExistence type="evidence at protein level"/>
<reference key="1">
    <citation type="journal article" date="1987" name="J. Bacteriol.">
        <title>Cloning and sequencing of the genes encoding the large and small subunits of the periplasmic (NiFeSe) hydrogenase of Desulfovibrio baculatus.</title>
        <authorList>
            <person name="Menon N.K."/>
            <person name="Peck H.D. Jr."/>
            <person name="le Gall J."/>
            <person name="Przybyla A.E."/>
        </authorList>
    </citation>
    <scope>NUCLEOTIDE SEQUENCE [GENOMIC DNA]</scope>
</reference>
<reference key="2">
    <citation type="journal article" date="1988" name="J. Bacteriol.">
        <authorList>
            <person name="Menon N.K."/>
            <person name="Pect H.D. Jr."/>
            <person name="le Gall J."/>
            <person name="Przybyla A.E."/>
        </authorList>
    </citation>
    <scope>ERRATUM OF PUBMED:3316183</scope>
    <scope>SEQUENCE REVISION</scope>
</reference>
<reference key="3">
    <citation type="journal article" date="1987" name="Biochem. Biophys. Res. Commun.">
        <title>Identification of three classes of hydrogenase in the genus, Desulfovibrio.</title>
        <authorList>
            <person name="Prickril B.C."/>
            <person name="He S.H."/>
            <person name="Li C."/>
            <person name="Menon N.K."/>
            <person name="Choi E.S."/>
            <person name="Przybyla A.E."/>
            <person name="Dervartanian D.V."/>
            <person name="Peck H.D. Jr."/>
            <person name="Fauque G."/>
            <person name="le Gall J."/>
            <person name="Teixeira M."/>
            <person name="Moura I."/>
            <person name="Moura J.J.G."/>
            <person name="Patil D."/>
            <person name="Huynh B.H."/>
        </authorList>
    </citation>
    <scope>PROTEIN SEQUENCE OF 33-67</scope>
    <source>
        <strain>DSM 1743</strain>
    </source>
</reference>
<reference key="4">
    <citation type="journal article" date="1999" name="Structure">
        <title>The crystal structure of a reduced [NiFeSe] hydrogenase provides an image of the activated catalytic center.</title>
        <authorList>
            <person name="Garcin E."/>
            <person name="Vernede X."/>
            <person name="Hatchikian E.C."/>
            <person name="Volbeda A."/>
            <person name="Frey M."/>
            <person name="Fontecilla-Camps J.-C."/>
        </authorList>
    </citation>
    <scope>X-RAY CRYSTALLOGRAPHY (2.15 ANGSTROMS)</scope>
</reference>
<name>PHSS_DESBA</name>
<accession>P13063</accession>
<organism>
    <name type="scientific">Desulfomicrobium baculatum</name>
    <name type="common">Desulfovibrio baculatus</name>
    <dbReference type="NCBI Taxonomy" id="899"/>
    <lineage>
        <taxon>Bacteria</taxon>
        <taxon>Pseudomonadati</taxon>
        <taxon>Thermodesulfobacteriota</taxon>
        <taxon>Desulfovibrionia</taxon>
        <taxon>Desulfovibrionales</taxon>
        <taxon>Desulfomicrobiaceae</taxon>
        <taxon>Desulfomicrobium</taxon>
    </lineage>
</organism>
<protein>
    <recommendedName>
        <fullName>Periplasmic [NiFeSe] hydrogenase small subunit</fullName>
        <ecNumber>1.12.99.6</ecNumber>
    </recommendedName>
    <alternativeName>
        <fullName>NiFeSe hydrogenlyase small chain</fullName>
    </alternativeName>
</protein>
<sequence length="315" mass="34221">MSLSRREFVKLCSAGVAGLGISQIYHPGIVHAMTEGAKKAPVIWVQGQGCTGCSVSLLNAVHPRIKEILLDVISLEFHPTVMASEGEMALAHMYEIAEKFNGNFFLLVEGAIPTAKEGRYCIVGETLDAKGHHHEVTMMELIRDLAPKSLATVAVGTCSAYGGIPAAEGNVTGSKSVRDFFADEKIEKLLVNVPGCPPHPDWMVGTLVAAWSHVLNPTEHPLPELDDDGRPLLFFGDNIHENCPYLDKYDNSEFAETFTKPGCKAELGCKGPSTYADCAKRRWNNGINWCVENAVCIGCVEPDFPDGKSPFYVAE</sequence>
<evidence type="ECO:0000255" key="1">
    <source>
        <dbReference type="PROSITE-ProRule" id="PRU00648"/>
    </source>
</evidence>
<evidence type="ECO:0000269" key="2">
    <source>
    </source>
</evidence>
<evidence type="ECO:0000305" key="3"/>
<evidence type="ECO:0007829" key="4">
    <source>
        <dbReference type="PDB" id="4KL8"/>
    </source>
</evidence>
<evidence type="ECO:0007829" key="5">
    <source>
        <dbReference type="PDB" id="4KN9"/>
    </source>
</evidence>